<protein>
    <recommendedName>
        <fullName>Protein LIGHT-DEPENDENT SHORT HYPOCOTYLS 8</fullName>
    </recommendedName>
    <alternativeName>
        <fullName>Protein ORGAN BOUNDARY 8</fullName>
    </alternativeName>
</protein>
<accession>Q9FZ51</accession>
<proteinExistence type="evidence at protein level"/>
<name>LSH8_ARATH</name>
<gene>
    <name type="primary">LSH8</name>
    <name type="synonym">OBO8</name>
    <name type="ordered locus">At1g16910</name>
    <name type="ORF">F17F16.11</name>
    <name type="ORF">F6I1.8</name>
</gene>
<evidence type="ECO:0000250" key="1"/>
<evidence type="ECO:0000255" key="2">
    <source>
        <dbReference type="PROSITE-ProRule" id="PRU01033"/>
    </source>
</evidence>
<evidence type="ECO:0000305" key="3"/>
<reference key="1">
    <citation type="journal article" date="2000" name="Nature">
        <title>Sequence and analysis of chromosome 1 of the plant Arabidopsis thaliana.</title>
        <authorList>
            <person name="Theologis A."/>
            <person name="Ecker J.R."/>
            <person name="Palm C.J."/>
            <person name="Federspiel N.A."/>
            <person name="Kaul S."/>
            <person name="White O."/>
            <person name="Alonso J."/>
            <person name="Altafi H."/>
            <person name="Araujo R."/>
            <person name="Bowman C.L."/>
            <person name="Brooks S.Y."/>
            <person name="Buehler E."/>
            <person name="Chan A."/>
            <person name="Chao Q."/>
            <person name="Chen H."/>
            <person name="Cheuk R.F."/>
            <person name="Chin C.W."/>
            <person name="Chung M.K."/>
            <person name="Conn L."/>
            <person name="Conway A.B."/>
            <person name="Conway A.R."/>
            <person name="Creasy T.H."/>
            <person name="Dewar K."/>
            <person name="Dunn P."/>
            <person name="Etgu P."/>
            <person name="Feldblyum T.V."/>
            <person name="Feng J.-D."/>
            <person name="Fong B."/>
            <person name="Fujii C.Y."/>
            <person name="Gill J.E."/>
            <person name="Goldsmith A.D."/>
            <person name="Haas B."/>
            <person name="Hansen N.F."/>
            <person name="Hughes B."/>
            <person name="Huizar L."/>
            <person name="Hunter J.L."/>
            <person name="Jenkins J."/>
            <person name="Johnson-Hopson C."/>
            <person name="Khan S."/>
            <person name="Khaykin E."/>
            <person name="Kim C.J."/>
            <person name="Koo H.L."/>
            <person name="Kremenetskaia I."/>
            <person name="Kurtz D.B."/>
            <person name="Kwan A."/>
            <person name="Lam B."/>
            <person name="Langin-Hooper S."/>
            <person name="Lee A."/>
            <person name="Lee J.M."/>
            <person name="Lenz C.A."/>
            <person name="Li J.H."/>
            <person name="Li Y.-P."/>
            <person name="Lin X."/>
            <person name="Liu S.X."/>
            <person name="Liu Z.A."/>
            <person name="Luros J.S."/>
            <person name="Maiti R."/>
            <person name="Marziali A."/>
            <person name="Militscher J."/>
            <person name="Miranda M."/>
            <person name="Nguyen M."/>
            <person name="Nierman W.C."/>
            <person name="Osborne B.I."/>
            <person name="Pai G."/>
            <person name="Peterson J."/>
            <person name="Pham P.K."/>
            <person name="Rizzo M."/>
            <person name="Rooney T."/>
            <person name="Rowley D."/>
            <person name="Sakano H."/>
            <person name="Salzberg S.L."/>
            <person name="Schwartz J.R."/>
            <person name="Shinn P."/>
            <person name="Southwick A.M."/>
            <person name="Sun H."/>
            <person name="Tallon L.J."/>
            <person name="Tambunga G."/>
            <person name="Toriumi M.J."/>
            <person name="Town C.D."/>
            <person name="Utterback T."/>
            <person name="Van Aken S."/>
            <person name="Vaysberg M."/>
            <person name="Vysotskaia V.S."/>
            <person name="Walker M."/>
            <person name="Wu D."/>
            <person name="Yu G."/>
            <person name="Fraser C.M."/>
            <person name="Venter J.C."/>
            <person name="Davis R.W."/>
        </authorList>
    </citation>
    <scope>NUCLEOTIDE SEQUENCE [LARGE SCALE GENOMIC DNA]</scope>
    <source>
        <strain>cv. Columbia</strain>
    </source>
</reference>
<reference key="2">
    <citation type="journal article" date="2017" name="Plant J.">
        <title>Araport11: a complete reannotation of the Arabidopsis thaliana reference genome.</title>
        <authorList>
            <person name="Cheng C.Y."/>
            <person name="Krishnakumar V."/>
            <person name="Chan A.P."/>
            <person name="Thibaud-Nissen F."/>
            <person name="Schobel S."/>
            <person name="Town C.D."/>
        </authorList>
    </citation>
    <scope>GENOME REANNOTATION</scope>
    <source>
        <strain>cv. Columbia</strain>
    </source>
</reference>
<reference key="3">
    <citation type="journal article" date="2005" name="Plant Physiol.">
        <title>Analysis of the cDNAs of hypothetical genes on Arabidopsis chromosome 2 reveals numerous transcript variants.</title>
        <authorList>
            <person name="Xiao Y.-L."/>
            <person name="Smith S.R."/>
            <person name="Ishmael N."/>
            <person name="Redman J.C."/>
            <person name="Kumar N."/>
            <person name="Monaghan E.L."/>
            <person name="Ayele M."/>
            <person name="Haas B.J."/>
            <person name="Wu H.C."/>
            <person name="Town C.D."/>
        </authorList>
    </citation>
    <scope>NUCLEOTIDE SEQUENCE [LARGE SCALE MRNA]</scope>
    <source>
        <strain>cv. Columbia</strain>
    </source>
</reference>
<reference key="4">
    <citation type="journal article" date="2004" name="Plant J.">
        <title>Overexpression of LSH1, a member of an uncharacterised gene family, causes enhanced light regulation of seedling development.</title>
        <authorList>
            <person name="Zhao L."/>
            <person name="Nakazawa M."/>
            <person name="Takase T."/>
            <person name="Manabe K."/>
            <person name="Kobayashi M."/>
            <person name="Seki M."/>
            <person name="Shinozaki K."/>
            <person name="Matsui M."/>
        </authorList>
    </citation>
    <scope>GENE FAMILY</scope>
    <scope>NOMENCLATURE</scope>
    <source>
        <strain>cv. Columbia</strain>
    </source>
</reference>
<reference key="5">
    <citation type="journal article" date="2011" name="Proc. Natl. Acad. Sci. U.S.A.">
        <title>Organ boundary1 defines a gene expressed at the junction between the shoot apical meristem and lateral organs.</title>
        <authorList>
            <person name="Cho E."/>
            <person name="Zambryski P.C."/>
        </authorList>
    </citation>
    <scope>GENE FAMILY</scope>
</reference>
<reference key="6">
    <citation type="journal article" date="2012" name="Biol. Direct">
        <title>ALOG domains: provenance of plant homeotic and developmental regulators from the DNA-binding domain of a novel class of DIRS1-type retroposons.</title>
        <authorList>
            <person name="Iyer L.M."/>
            <person name="Aravind L."/>
        </authorList>
    </citation>
    <scope>DNA-BINDING</scope>
    <scope>GENE FAMILY</scope>
</reference>
<feature type="chain" id="PRO_0000425295" description="Protein LIGHT-DEPENDENT SHORT HYPOCOTYLS 8">
    <location>
        <begin position="1"/>
        <end position="164"/>
    </location>
</feature>
<feature type="domain" description="ALOG" evidence="2">
    <location>
        <begin position="23"/>
        <end position="150"/>
    </location>
</feature>
<feature type="short sequence motif" description="Nuclear localization signal" evidence="1">
    <location>
        <begin position="148"/>
        <end position="152"/>
    </location>
</feature>
<dbReference type="EMBL" id="AC051629">
    <property type="protein sequence ID" value="AAF99841.1"/>
    <property type="molecule type" value="Genomic_DNA"/>
</dbReference>
<dbReference type="EMBL" id="CP002684">
    <property type="protein sequence ID" value="AEE29520.1"/>
    <property type="molecule type" value="Genomic_DNA"/>
</dbReference>
<dbReference type="EMBL" id="AY800583">
    <property type="protein sequence ID" value="AAV68819.1"/>
    <property type="molecule type" value="mRNA"/>
</dbReference>
<dbReference type="PIR" id="F86304">
    <property type="entry name" value="F86304"/>
</dbReference>
<dbReference type="RefSeq" id="NP_173135.1">
    <property type="nucleotide sequence ID" value="NM_101552.3"/>
</dbReference>
<dbReference type="SMR" id="Q9FZ51"/>
<dbReference type="STRING" id="3702.Q9FZ51"/>
<dbReference type="PaxDb" id="3702-AT1G16910.1"/>
<dbReference type="ProteomicsDB" id="238501"/>
<dbReference type="EnsemblPlants" id="AT1G16910.1">
    <property type="protein sequence ID" value="AT1G16910.1"/>
    <property type="gene ID" value="AT1G16910"/>
</dbReference>
<dbReference type="GeneID" id="838262"/>
<dbReference type="Gramene" id="AT1G16910.1">
    <property type="protein sequence ID" value="AT1G16910.1"/>
    <property type="gene ID" value="AT1G16910"/>
</dbReference>
<dbReference type="KEGG" id="ath:AT1G16910"/>
<dbReference type="Araport" id="AT1G16910"/>
<dbReference type="TAIR" id="AT1G16910">
    <property type="gene designation" value="LSH8"/>
</dbReference>
<dbReference type="eggNOG" id="ENOG502QQTQ">
    <property type="taxonomic scope" value="Eukaryota"/>
</dbReference>
<dbReference type="HOGENOM" id="CLU_071168_1_1_1"/>
<dbReference type="InParanoid" id="Q9FZ51"/>
<dbReference type="OrthoDB" id="1906822at2759"/>
<dbReference type="PhylomeDB" id="Q9FZ51"/>
<dbReference type="PRO" id="PR:Q9FZ51"/>
<dbReference type="Proteomes" id="UP000006548">
    <property type="component" value="Chromosome 1"/>
</dbReference>
<dbReference type="ExpressionAtlas" id="Q9FZ51">
    <property type="expression patterns" value="baseline and differential"/>
</dbReference>
<dbReference type="GO" id="GO:0005634">
    <property type="term" value="C:nucleus"/>
    <property type="evidence" value="ECO:0000250"/>
    <property type="project" value="UniProtKB"/>
</dbReference>
<dbReference type="GO" id="GO:0003677">
    <property type="term" value="F:DNA binding"/>
    <property type="evidence" value="ECO:0007669"/>
    <property type="project" value="UniProtKB-KW"/>
</dbReference>
<dbReference type="GO" id="GO:0009299">
    <property type="term" value="P:mRNA transcription"/>
    <property type="evidence" value="ECO:0000250"/>
    <property type="project" value="UniProtKB"/>
</dbReference>
<dbReference type="GO" id="GO:0090698">
    <property type="term" value="P:post-embryonic plant morphogenesis"/>
    <property type="evidence" value="ECO:0000250"/>
    <property type="project" value="UniProtKB"/>
</dbReference>
<dbReference type="InterPro" id="IPR040222">
    <property type="entry name" value="ALOG"/>
</dbReference>
<dbReference type="InterPro" id="IPR006936">
    <property type="entry name" value="ALOG_dom"/>
</dbReference>
<dbReference type="PANTHER" id="PTHR31165">
    <property type="entry name" value="PROTEIN G1-LIKE2"/>
    <property type="match status" value="1"/>
</dbReference>
<dbReference type="PANTHER" id="PTHR31165:SF9">
    <property type="entry name" value="PROTEIN LIGHT-DEPENDENT SHORT HYPOCOTYLS 7-RELATED"/>
    <property type="match status" value="1"/>
</dbReference>
<dbReference type="Pfam" id="PF04852">
    <property type="entry name" value="ALOG_dom"/>
    <property type="match status" value="1"/>
</dbReference>
<dbReference type="PROSITE" id="PS51697">
    <property type="entry name" value="ALOG"/>
    <property type="match status" value="1"/>
</dbReference>
<organism>
    <name type="scientific">Arabidopsis thaliana</name>
    <name type="common">Mouse-ear cress</name>
    <dbReference type="NCBI Taxonomy" id="3702"/>
    <lineage>
        <taxon>Eukaryota</taxon>
        <taxon>Viridiplantae</taxon>
        <taxon>Streptophyta</taxon>
        <taxon>Embryophyta</taxon>
        <taxon>Tracheophyta</taxon>
        <taxon>Spermatophyta</taxon>
        <taxon>Magnoliopsida</taxon>
        <taxon>eudicotyledons</taxon>
        <taxon>Gunneridae</taxon>
        <taxon>Pentapetalae</taxon>
        <taxon>rosids</taxon>
        <taxon>malvids</taxon>
        <taxon>Brassicales</taxon>
        <taxon>Brassicaceae</taxon>
        <taxon>Camelineae</taxon>
        <taxon>Arabidopsis</taxon>
    </lineage>
</organism>
<sequence length="164" mass="18524">MTSTNTRNKGKCIVEGPPPTLSRYESQKSRDWNTFCQYLMTKMPPVHVWECESNHILDFLQSRDQFGKTKVHIQGCVFFGQKEPPGECNCPLKQAWGSLDALIGRLRAAYEENGGLTEKNPFARGGIRIFLREVRGSQAKARGVLYKKKKRLVVVGTGTSTTWT</sequence>
<keyword id="KW-0217">Developmental protein</keyword>
<keyword id="KW-0238">DNA-binding</keyword>
<keyword id="KW-0539">Nucleus</keyword>
<keyword id="KW-1185">Reference proteome</keyword>
<keyword id="KW-0804">Transcription</keyword>
<keyword id="KW-0805">Transcription regulation</keyword>
<comment type="function">
    <text evidence="1">Probable transcription regulator that acts as a developmental regulator by promoting cell growth in response to light.</text>
</comment>
<comment type="subcellular location">
    <subcellularLocation>
        <location evidence="1">Nucleus</location>
    </subcellularLocation>
</comment>
<comment type="similarity">
    <text evidence="3">Belongs to the plant homeotic and developmental regulators ALOG protein family.</text>
</comment>